<keyword id="KW-0929">Antimicrobial</keyword>
<keyword id="KW-1015">Disulfide bond</keyword>
<keyword id="KW-0295">Fungicide</keyword>
<keyword id="KW-0611">Plant defense</keyword>
<keyword id="KW-1185">Reference proteome</keyword>
<proteinExistence type="uncertain"/>
<name>DF105_ARATH</name>
<protein>
    <recommendedName>
        <fullName>Putative defensin-like protein 105</fullName>
    </recommendedName>
</protein>
<feature type="chain" id="PRO_0000379668" description="Putative defensin-like protein 105">
    <location>
        <begin position="1"/>
        <end position="38"/>
    </location>
</feature>
<feature type="disulfide bond" evidence="1">
    <location>
        <begin position="5"/>
        <end position="27"/>
    </location>
</feature>
<feature type="disulfide bond" evidence="1">
    <location>
        <begin position="13"/>
        <end position="33"/>
    </location>
</feature>
<feature type="disulfide bond" evidence="1">
    <location>
        <begin position="17"/>
        <end position="34"/>
    </location>
</feature>
<gene>
    <name type="ordered locus">At1g61685</name>
    <name type="ORF">T13M11</name>
</gene>
<evidence type="ECO:0000250" key="1"/>
<evidence type="ECO:0000305" key="2"/>
<comment type="similarity">
    <text evidence="2">Belongs to the DEFL family.</text>
</comment>
<comment type="caution">
    <text evidence="2">Could be the product of a pseudogene. Lacks the signal peptide and 1 of the 4 disulfide bonds, which are conserved features of the family.</text>
</comment>
<organism>
    <name type="scientific">Arabidopsis thaliana</name>
    <name type="common">Mouse-ear cress</name>
    <dbReference type="NCBI Taxonomy" id="3702"/>
    <lineage>
        <taxon>Eukaryota</taxon>
        <taxon>Viridiplantae</taxon>
        <taxon>Streptophyta</taxon>
        <taxon>Embryophyta</taxon>
        <taxon>Tracheophyta</taxon>
        <taxon>Spermatophyta</taxon>
        <taxon>Magnoliopsida</taxon>
        <taxon>eudicotyledons</taxon>
        <taxon>Gunneridae</taxon>
        <taxon>Pentapetalae</taxon>
        <taxon>rosids</taxon>
        <taxon>malvids</taxon>
        <taxon>Brassicales</taxon>
        <taxon>Brassicaceae</taxon>
        <taxon>Camelineae</taxon>
        <taxon>Arabidopsis</taxon>
    </lineage>
</organism>
<reference key="1">
    <citation type="journal article" date="2000" name="Nature">
        <title>Sequence and analysis of chromosome 1 of the plant Arabidopsis thaliana.</title>
        <authorList>
            <person name="Theologis A."/>
            <person name="Ecker J.R."/>
            <person name="Palm C.J."/>
            <person name="Federspiel N.A."/>
            <person name="Kaul S."/>
            <person name="White O."/>
            <person name="Alonso J."/>
            <person name="Altafi H."/>
            <person name="Araujo R."/>
            <person name="Bowman C.L."/>
            <person name="Brooks S.Y."/>
            <person name="Buehler E."/>
            <person name="Chan A."/>
            <person name="Chao Q."/>
            <person name="Chen H."/>
            <person name="Cheuk R.F."/>
            <person name="Chin C.W."/>
            <person name="Chung M.K."/>
            <person name="Conn L."/>
            <person name="Conway A.B."/>
            <person name="Conway A.R."/>
            <person name="Creasy T.H."/>
            <person name="Dewar K."/>
            <person name="Dunn P."/>
            <person name="Etgu P."/>
            <person name="Feldblyum T.V."/>
            <person name="Feng J.-D."/>
            <person name="Fong B."/>
            <person name="Fujii C.Y."/>
            <person name="Gill J.E."/>
            <person name="Goldsmith A.D."/>
            <person name="Haas B."/>
            <person name="Hansen N.F."/>
            <person name="Hughes B."/>
            <person name="Huizar L."/>
            <person name="Hunter J.L."/>
            <person name="Jenkins J."/>
            <person name="Johnson-Hopson C."/>
            <person name="Khan S."/>
            <person name="Khaykin E."/>
            <person name="Kim C.J."/>
            <person name="Koo H.L."/>
            <person name="Kremenetskaia I."/>
            <person name="Kurtz D.B."/>
            <person name="Kwan A."/>
            <person name="Lam B."/>
            <person name="Langin-Hooper S."/>
            <person name="Lee A."/>
            <person name="Lee J.M."/>
            <person name="Lenz C.A."/>
            <person name="Li J.H."/>
            <person name="Li Y.-P."/>
            <person name="Lin X."/>
            <person name="Liu S.X."/>
            <person name="Liu Z.A."/>
            <person name="Luros J.S."/>
            <person name="Maiti R."/>
            <person name="Marziali A."/>
            <person name="Militscher J."/>
            <person name="Miranda M."/>
            <person name="Nguyen M."/>
            <person name="Nierman W.C."/>
            <person name="Osborne B.I."/>
            <person name="Pai G."/>
            <person name="Peterson J."/>
            <person name="Pham P.K."/>
            <person name="Rizzo M."/>
            <person name="Rooney T."/>
            <person name="Rowley D."/>
            <person name="Sakano H."/>
            <person name="Salzberg S.L."/>
            <person name="Schwartz J.R."/>
            <person name="Shinn P."/>
            <person name="Southwick A.M."/>
            <person name="Sun H."/>
            <person name="Tallon L.J."/>
            <person name="Tambunga G."/>
            <person name="Toriumi M.J."/>
            <person name="Town C.D."/>
            <person name="Utterback T."/>
            <person name="Van Aken S."/>
            <person name="Vaysberg M."/>
            <person name="Vysotskaia V.S."/>
            <person name="Walker M."/>
            <person name="Wu D."/>
            <person name="Yu G."/>
            <person name="Fraser C.M."/>
            <person name="Venter J.C."/>
            <person name="Davis R.W."/>
        </authorList>
    </citation>
    <scope>NUCLEOTIDE SEQUENCE [LARGE SCALE GENOMIC DNA]</scope>
    <source>
        <strain>cv. Columbia</strain>
    </source>
</reference>
<reference key="2">
    <citation type="journal article" date="2017" name="Plant J.">
        <title>Araport11: a complete reannotation of the Arabidopsis thaliana reference genome.</title>
        <authorList>
            <person name="Cheng C.Y."/>
            <person name="Krishnakumar V."/>
            <person name="Chan A.P."/>
            <person name="Thibaud-Nissen F."/>
            <person name="Schobel S."/>
            <person name="Town C.D."/>
        </authorList>
    </citation>
    <scope>GENOME REANNOTATION</scope>
    <source>
        <strain>cv. Columbia</strain>
    </source>
</reference>
<reference key="3">
    <citation type="journal article" date="2005" name="Plant Physiol.">
        <title>Genome organization of more than 300 defensin-like genes in Arabidopsis.</title>
        <authorList>
            <person name="Silverstein K.A.T."/>
            <person name="Graham M.A."/>
            <person name="Paape T.D."/>
            <person name="VandenBosch K.A."/>
        </authorList>
    </citation>
    <scope>GENE FAMILY</scope>
</reference>
<dbReference type="EMBL" id="AC005882">
    <property type="status" value="NOT_ANNOTATED_CDS"/>
    <property type="molecule type" value="Genomic_DNA"/>
</dbReference>
<dbReference type="EMBL" id="CP002684">
    <property type="status" value="NOT_ANNOTATED_CDS"/>
    <property type="molecule type" value="Genomic_DNA"/>
</dbReference>
<dbReference type="SMR" id="P0CAY3"/>
<dbReference type="Araport" id="AT1G61685"/>
<dbReference type="TAIR" id="AT1G61685"/>
<dbReference type="InParanoid" id="P0CAY3"/>
<dbReference type="Proteomes" id="UP000006548">
    <property type="component" value="Chromosome 1"/>
</dbReference>
<dbReference type="GO" id="GO:0050832">
    <property type="term" value="P:defense response to fungus"/>
    <property type="evidence" value="ECO:0007669"/>
    <property type="project" value="UniProtKB-KW"/>
</dbReference>
<dbReference type="GO" id="GO:0031640">
    <property type="term" value="P:killing of cells of another organism"/>
    <property type="evidence" value="ECO:0007669"/>
    <property type="project" value="UniProtKB-KW"/>
</dbReference>
<sequence length="38" mass="4196">MLMACYSAGQLGCLVFCNEAEYSYGKCIGRGRCCCYDL</sequence>
<accession>P0CAY3</accession>